<organism>
    <name type="scientific">Janthinobacterium sp. (strain Marseille)</name>
    <name type="common">Minibacterium massiliensis</name>
    <dbReference type="NCBI Taxonomy" id="375286"/>
    <lineage>
        <taxon>Bacteria</taxon>
        <taxon>Pseudomonadati</taxon>
        <taxon>Pseudomonadota</taxon>
        <taxon>Betaproteobacteria</taxon>
        <taxon>Burkholderiales</taxon>
        <taxon>Oxalobacteraceae</taxon>
        <taxon>Janthinobacterium</taxon>
    </lineage>
</organism>
<name>PDXA_JANMA</name>
<dbReference type="EC" id="1.1.1.262" evidence="1"/>
<dbReference type="EMBL" id="CP000269">
    <property type="protein sequence ID" value="ABR88849.1"/>
    <property type="molecule type" value="Genomic_DNA"/>
</dbReference>
<dbReference type="RefSeq" id="WP_012078284.1">
    <property type="nucleotide sequence ID" value="NC_009659.1"/>
</dbReference>
<dbReference type="SMR" id="A6SV12"/>
<dbReference type="STRING" id="375286.mma_0419"/>
<dbReference type="KEGG" id="mms:mma_0419"/>
<dbReference type="eggNOG" id="COG1995">
    <property type="taxonomic scope" value="Bacteria"/>
</dbReference>
<dbReference type="HOGENOM" id="CLU_040168_1_0_4"/>
<dbReference type="OrthoDB" id="9801783at2"/>
<dbReference type="UniPathway" id="UPA00244">
    <property type="reaction ID" value="UER00312"/>
</dbReference>
<dbReference type="Proteomes" id="UP000006388">
    <property type="component" value="Chromosome"/>
</dbReference>
<dbReference type="GO" id="GO:0005737">
    <property type="term" value="C:cytoplasm"/>
    <property type="evidence" value="ECO:0007669"/>
    <property type="project" value="UniProtKB-SubCell"/>
</dbReference>
<dbReference type="GO" id="GO:0050570">
    <property type="term" value="F:4-hydroxythreonine-4-phosphate dehydrogenase activity"/>
    <property type="evidence" value="ECO:0007669"/>
    <property type="project" value="UniProtKB-UniRule"/>
</dbReference>
<dbReference type="GO" id="GO:0050897">
    <property type="term" value="F:cobalt ion binding"/>
    <property type="evidence" value="ECO:0007669"/>
    <property type="project" value="UniProtKB-UniRule"/>
</dbReference>
<dbReference type="GO" id="GO:0000287">
    <property type="term" value="F:magnesium ion binding"/>
    <property type="evidence" value="ECO:0007669"/>
    <property type="project" value="UniProtKB-UniRule"/>
</dbReference>
<dbReference type="GO" id="GO:0051287">
    <property type="term" value="F:NAD binding"/>
    <property type="evidence" value="ECO:0007669"/>
    <property type="project" value="InterPro"/>
</dbReference>
<dbReference type="GO" id="GO:0008270">
    <property type="term" value="F:zinc ion binding"/>
    <property type="evidence" value="ECO:0007669"/>
    <property type="project" value="UniProtKB-UniRule"/>
</dbReference>
<dbReference type="GO" id="GO:0042823">
    <property type="term" value="P:pyridoxal phosphate biosynthetic process"/>
    <property type="evidence" value="ECO:0007669"/>
    <property type="project" value="UniProtKB-UniRule"/>
</dbReference>
<dbReference type="GO" id="GO:0008615">
    <property type="term" value="P:pyridoxine biosynthetic process"/>
    <property type="evidence" value="ECO:0007669"/>
    <property type="project" value="UniProtKB-UniRule"/>
</dbReference>
<dbReference type="Gene3D" id="3.40.718.10">
    <property type="entry name" value="Isopropylmalate Dehydrogenase"/>
    <property type="match status" value="1"/>
</dbReference>
<dbReference type="HAMAP" id="MF_00536">
    <property type="entry name" value="PdxA"/>
    <property type="match status" value="1"/>
</dbReference>
<dbReference type="InterPro" id="IPR037510">
    <property type="entry name" value="PdxA"/>
</dbReference>
<dbReference type="InterPro" id="IPR005255">
    <property type="entry name" value="PdxA_fam"/>
</dbReference>
<dbReference type="NCBIfam" id="TIGR00557">
    <property type="entry name" value="pdxA"/>
    <property type="match status" value="1"/>
</dbReference>
<dbReference type="NCBIfam" id="NF002520">
    <property type="entry name" value="PRK01909.1"/>
    <property type="match status" value="1"/>
</dbReference>
<dbReference type="PANTHER" id="PTHR30004">
    <property type="entry name" value="4-HYDROXYTHREONINE-4-PHOSPHATE DEHYDROGENASE"/>
    <property type="match status" value="1"/>
</dbReference>
<dbReference type="PANTHER" id="PTHR30004:SF5">
    <property type="entry name" value="4-HYDROXYTHREONINE-4-PHOSPHATE DEHYDROGENASE"/>
    <property type="match status" value="1"/>
</dbReference>
<dbReference type="Pfam" id="PF04166">
    <property type="entry name" value="PdxA"/>
    <property type="match status" value="1"/>
</dbReference>
<dbReference type="SUPFAM" id="SSF53659">
    <property type="entry name" value="Isocitrate/Isopropylmalate dehydrogenase-like"/>
    <property type="match status" value="1"/>
</dbReference>
<proteinExistence type="inferred from homology"/>
<protein>
    <recommendedName>
        <fullName evidence="1">4-hydroxythreonine-4-phosphate dehydrogenase</fullName>
        <ecNumber evidence="1">1.1.1.262</ecNumber>
    </recommendedName>
    <alternativeName>
        <fullName evidence="1">4-(phosphohydroxy)-L-threonine dehydrogenase</fullName>
    </alternativeName>
</protein>
<comment type="function">
    <text evidence="1">Catalyzes the NAD(P)-dependent oxidation of 4-(phosphooxy)-L-threonine (HTP) into 2-amino-3-oxo-4-(phosphooxy)butyric acid which spontaneously decarboxylates to form 3-amino-2-oxopropyl phosphate (AHAP).</text>
</comment>
<comment type="catalytic activity">
    <reaction evidence="1">
        <text>4-(phosphooxy)-L-threonine + NAD(+) = 3-amino-2-oxopropyl phosphate + CO2 + NADH</text>
        <dbReference type="Rhea" id="RHEA:32275"/>
        <dbReference type="ChEBI" id="CHEBI:16526"/>
        <dbReference type="ChEBI" id="CHEBI:57279"/>
        <dbReference type="ChEBI" id="CHEBI:57540"/>
        <dbReference type="ChEBI" id="CHEBI:57945"/>
        <dbReference type="ChEBI" id="CHEBI:58452"/>
        <dbReference type="EC" id="1.1.1.262"/>
    </reaction>
</comment>
<comment type="cofactor">
    <cofactor evidence="1">
        <name>Zn(2+)</name>
        <dbReference type="ChEBI" id="CHEBI:29105"/>
    </cofactor>
    <cofactor evidence="1">
        <name>Mg(2+)</name>
        <dbReference type="ChEBI" id="CHEBI:18420"/>
    </cofactor>
    <cofactor evidence="1">
        <name>Co(2+)</name>
        <dbReference type="ChEBI" id="CHEBI:48828"/>
    </cofactor>
    <text evidence="1">Binds 1 divalent metal cation per subunit. Can use ions such as Zn(2+), Mg(2+) or Co(2+).</text>
</comment>
<comment type="pathway">
    <text evidence="1">Cofactor biosynthesis; pyridoxine 5'-phosphate biosynthesis; pyridoxine 5'-phosphate from D-erythrose 4-phosphate: step 4/5.</text>
</comment>
<comment type="subunit">
    <text evidence="1">Homodimer.</text>
</comment>
<comment type="subcellular location">
    <subcellularLocation>
        <location evidence="1">Cytoplasm</location>
    </subcellularLocation>
</comment>
<comment type="miscellaneous">
    <text evidence="1">The active site is located at the dimer interface.</text>
</comment>
<comment type="similarity">
    <text evidence="1">Belongs to the PdxA family.</text>
</comment>
<evidence type="ECO:0000255" key="1">
    <source>
        <dbReference type="HAMAP-Rule" id="MF_00536"/>
    </source>
</evidence>
<accession>A6SV12</accession>
<feature type="chain" id="PRO_1000051506" description="4-hydroxythreonine-4-phosphate dehydrogenase">
    <location>
        <begin position="1"/>
        <end position="343"/>
    </location>
</feature>
<feature type="binding site" evidence="1">
    <location>
        <position position="141"/>
    </location>
    <ligand>
        <name>substrate</name>
    </ligand>
</feature>
<feature type="binding site" evidence="1">
    <location>
        <position position="142"/>
    </location>
    <ligand>
        <name>substrate</name>
    </ligand>
</feature>
<feature type="binding site" evidence="1">
    <location>
        <position position="175"/>
    </location>
    <ligand>
        <name>a divalent metal cation</name>
        <dbReference type="ChEBI" id="CHEBI:60240"/>
        <note>ligand shared between dimeric partners</note>
    </ligand>
</feature>
<feature type="binding site" evidence="1">
    <location>
        <position position="220"/>
    </location>
    <ligand>
        <name>a divalent metal cation</name>
        <dbReference type="ChEBI" id="CHEBI:60240"/>
        <note>ligand shared between dimeric partners</note>
    </ligand>
</feature>
<feature type="binding site" evidence="1">
    <location>
        <position position="275"/>
    </location>
    <ligand>
        <name>a divalent metal cation</name>
        <dbReference type="ChEBI" id="CHEBI:60240"/>
        <note>ligand shared between dimeric partners</note>
    </ligand>
</feature>
<feature type="binding site" evidence="1">
    <location>
        <position position="283"/>
    </location>
    <ligand>
        <name>substrate</name>
    </ligand>
</feature>
<feature type="binding site" evidence="1">
    <location>
        <position position="292"/>
    </location>
    <ligand>
        <name>substrate</name>
    </ligand>
</feature>
<feature type="binding site" evidence="1">
    <location>
        <position position="301"/>
    </location>
    <ligand>
        <name>substrate</name>
    </ligand>
</feature>
<keyword id="KW-0170">Cobalt</keyword>
<keyword id="KW-0963">Cytoplasm</keyword>
<keyword id="KW-0460">Magnesium</keyword>
<keyword id="KW-0479">Metal-binding</keyword>
<keyword id="KW-0520">NAD</keyword>
<keyword id="KW-0521">NADP</keyword>
<keyword id="KW-0560">Oxidoreductase</keyword>
<keyword id="KW-0664">Pyridoxine biosynthesis</keyword>
<keyword id="KW-0862">Zinc</keyword>
<reference key="1">
    <citation type="journal article" date="2007" name="PLoS Genet.">
        <title>Genome analysis of Minibacterium massiliensis highlights the convergent evolution of water-living bacteria.</title>
        <authorList>
            <person name="Audic S."/>
            <person name="Robert C."/>
            <person name="Campagna B."/>
            <person name="Parinello H."/>
            <person name="Claverie J.-M."/>
            <person name="Raoult D."/>
            <person name="Drancourt M."/>
        </authorList>
    </citation>
    <scope>NUCLEOTIDE SEQUENCE [LARGE SCALE GENOMIC DNA]</scope>
    <source>
        <strain>Marseille</strain>
    </source>
</reference>
<sequence length="343" mass="35915">MSKRPTIAITSGEPAGIGPEISIRAAWELRADVKSILIGDAAFLAMTAAAINPAIRLSALSLQAVRNSGVPDFSRDQIAVIDCPLAAHVVPGKLDAQNGRYVLQTLDIGIEGAQQGWFDAIVTAPLQKSTINDAGVPFTGHTEYLADKTNTAQVVMMLATNATPQPLRVGLATTHLALKDVAAAITIDSLAGILDILLADLQNKFGIAKPRILVAGLNPHAGEGGYLGREEIEVITPVLQAAQAKGFDVRGPYPADTLFQQKYLEDADCVLAMYHDQGLPVLKYASFGLGVNITLGLPLIRTSVDHGTALDLAAAGLGQADHGSMLEAMRIAAQMAAAARTSS</sequence>
<gene>
    <name evidence="1" type="primary">pdxA</name>
    <name type="ordered locus">mma_0419</name>
</gene>